<protein>
    <recommendedName>
        <fullName evidence="1">Large ribosomal subunit protein uL4</fullName>
    </recommendedName>
    <alternativeName>
        <fullName evidence="3">50S ribosomal protein L4</fullName>
    </alternativeName>
</protein>
<dbReference type="EMBL" id="CU207211">
    <property type="protein sequence ID" value="CAL63274.1"/>
    <property type="molecule type" value="Genomic_DNA"/>
</dbReference>
<dbReference type="SMR" id="A4G9T7"/>
<dbReference type="STRING" id="204773.HEAR3165"/>
<dbReference type="KEGG" id="har:HEAR3165"/>
<dbReference type="eggNOG" id="COG0088">
    <property type="taxonomic scope" value="Bacteria"/>
</dbReference>
<dbReference type="HOGENOM" id="CLU_041575_5_2_4"/>
<dbReference type="OrthoDB" id="9803201at2"/>
<dbReference type="Proteomes" id="UP000006697">
    <property type="component" value="Chromosome"/>
</dbReference>
<dbReference type="GO" id="GO:1990904">
    <property type="term" value="C:ribonucleoprotein complex"/>
    <property type="evidence" value="ECO:0007669"/>
    <property type="project" value="UniProtKB-KW"/>
</dbReference>
<dbReference type="GO" id="GO:0005840">
    <property type="term" value="C:ribosome"/>
    <property type="evidence" value="ECO:0007669"/>
    <property type="project" value="UniProtKB-KW"/>
</dbReference>
<dbReference type="GO" id="GO:0019843">
    <property type="term" value="F:rRNA binding"/>
    <property type="evidence" value="ECO:0007669"/>
    <property type="project" value="UniProtKB-UniRule"/>
</dbReference>
<dbReference type="GO" id="GO:0003735">
    <property type="term" value="F:structural constituent of ribosome"/>
    <property type="evidence" value="ECO:0007669"/>
    <property type="project" value="InterPro"/>
</dbReference>
<dbReference type="GO" id="GO:0006412">
    <property type="term" value="P:translation"/>
    <property type="evidence" value="ECO:0007669"/>
    <property type="project" value="UniProtKB-UniRule"/>
</dbReference>
<dbReference type="Gene3D" id="3.40.1370.10">
    <property type="match status" value="1"/>
</dbReference>
<dbReference type="HAMAP" id="MF_01328_B">
    <property type="entry name" value="Ribosomal_uL4_B"/>
    <property type="match status" value="1"/>
</dbReference>
<dbReference type="InterPro" id="IPR002136">
    <property type="entry name" value="Ribosomal_uL4"/>
</dbReference>
<dbReference type="InterPro" id="IPR013005">
    <property type="entry name" value="Ribosomal_uL4-like"/>
</dbReference>
<dbReference type="InterPro" id="IPR023574">
    <property type="entry name" value="Ribosomal_uL4_dom_sf"/>
</dbReference>
<dbReference type="NCBIfam" id="TIGR03953">
    <property type="entry name" value="rplD_bact"/>
    <property type="match status" value="1"/>
</dbReference>
<dbReference type="PANTHER" id="PTHR10746">
    <property type="entry name" value="50S RIBOSOMAL PROTEIN L4"/>
    <property type="match status" value="1"/>
</dbReference>
<dbReference type="PANTHER" id="PTHR10746:SF6">
    <property type="entry name" value="LARGE RIBOSOMAL SUBUNIT PROTEIN UL4M"/>
    <property type="match status" value="1"/>
</dbReference>
<dbReference type="Pfam" id="PF00573">
    <property type="entry name" value="Ribosomal_L4"/>
    <property type="match status" value="1"/>
</dbReference>
<dbReference type="SUPFAM" id="SSF52166">
    <property type="entry name" value="Ribosomal protein L4"/>
    <property type="match status" value="1"/>
</dbReference>
<sequence>MELKLLNDQGQSSSNVAAPDTIFGRDYNEALIHQVVVAYQANARSGNRKQKDREEVHHTTKKPWRQKGTGRARAGMSSSPLWRGGGRIFPNSPDENFSHKVNKKMYRAGLCSILSQLAREGRLSVIESLSVDAPKTKLLSQKLKGMGLDSVLVITDSLDENLLLASRNLPNVLICEPRHADPVSLVFYKKILITKLALAKIEEMLA</sequence>
<name>RL4_HERAR</name>
<accession>A4G9T7</accession>
<gene>
    <name evidence="1" type="primary">rplD</name>
    <name type="ordered locus">HEAR3165</name>
</gene>
<feature type="chain" id="PRO_1000052416" description="Large ribosomal subunit protein uL4">
    <location>
        <begin position="1"/>
        <end position="206"/>
    </location>
</feature>
<feature type="region of interest" description="Disordered" evidence="2">
    <location>
        <begin position="43"/>
        <end position="78"/>
    </location>
</feature>
<feature type="compositionally biased region" description="Basic and acidic residues" evidence="2">
    <location>
        <begin position="49"/>
        <end position="58"/>
    </location>
</feature>
<feature type="compositionally biased region" description="Basic residues" evidence="2">
    <location>
        <begin position="59"/>
        <end position="70"/>
    </location>
</feature>
<proteinExistence type="inferred from homology"/>
<reference key="1">
    <citation type="journal article" date="2007" name="PLoS Genet.">
        <title>A tale of two oxidation states: bacterial colonization of arsenic-rich environments.</title>
        <authorList>
            <person name="Muller D."/>
            <person name="Medigue C."/>
            <person name="Koechler S."/>
            <person name="Barbe V."/>
            <person name="Barakat M."/>
            <person name="Talla E."/>
            <person name="Bonnefoy V."/>
            <person name="Krin E."/>
            <person name="Arsene-Ploetze F."/>
            <person name="Carapito C."/>
            <person name="Chandler M."/>
            <person name="Cournoyer B."/>
            <person name="Cruveiller S."/>
            <person name="Dossat C."/>
            <person name="Duval S."/>
            <person name="Heymann M."/>
            <person name="Leize E."/>
            <person name="Lieutaud A."/>
            <person name="Lievremont D."/>
            <person name="Makita Y."/>
            <person name="Mangenot S."/>
            <person name="Nitschke W."/>
            <person name="Ortet P."/>
            <person name="Perdrial N."/>
            <person name="Schoepp B."/>
            <person name="Siguier P."/>
            <person name="Simeonova D.D."/>
            <person name="Rouy Z."/>
            <person name="Segurens B."/>
            <person name="Turlin E."/>
            <person name="Vallenet D."/>
            <person name="van Dorsselaer A."/>
            <person name="Weiss S."/>
            <person name="Weissenbach J."/>
            <person name="Lett M.-C."/>
            <person name="Danchin A."/>
            <person name="Bertin P.N."/>
        </authorList>
    </citation>
    <scope>NUCLEOTIDE SEQUENCE [LARGE SCALE GENOMIC DNA]</scope>
    <source>
        <strain>ULPAs1</strain>
    </source>
</reference>
<organism>
    <name type="scientific">Herminiimonas arsenicoxydans</name>
    <dbReference type="NCBI Taxonomy" id="204773"/>
    <lineage>
        <taxon>Bacteria</taxon>
        <taxon>Pseudomonadati</taxon>
        <taxon>Pseudomonadota</taxon>
        <taxon>Betaproteobacteria</taxon>
        <taxon>Burkholderiales</taxon>
        <taxon>Oxalobacteraceae</taxon>
        <taxon>Herminiimonas</taxon>
    </lineage>
</organism>
<keyword id="KW-1185">Reference proteome</keyword>
<keyword id="KW-0687">Ribonucleoprotein</keyword>
<keyword id="KW-0689">Ribosomal protein</keyword>
<keyword id="KW-0694">RNA-binding</keyword>
<keyword id="KW-0699">rRNA-binding</keyword>
<comment type="function">
    <text evidence="1">One of the primary rRNA binding proteins, this protein initially binds near the 5'-end of the 23S rRNA. It is important during the early stages of 50S assembly. It makes multiple contacts with different domains of the 23S rRNA in the assembled 50S subunit and ribosome.</text>
</comment>
<comment type="function">
    <text evidence="1">Forms part of the polypeptide exit tunnel.</text>
</comment>
<comment type="subunit">
    <text evidence="1">Part of the 50S ribosomal subunit.</text>
</comment>
<comment type="similarity">
    <text evidence="1">Belongs to the universal ribosomal protein uL4 family.</text>
</comment>
<evidence type="ECO:0000255" key="1">
    <source>
        <dbReference type="HAMAP-Rule" id="MF_01328"/>
    </source>
</evidence>
<evidence type="ECO:0000256" key="2">
    <source>
        <dbReference type="SAM" id="MobiDB-lite"/>
    </source>
</evidence>
<evidence type="ECO:0000305" key="3"/>